<reference key="1">
    <citation type="journal article" date="2010" name="PLoS ONE">
        <title>The complete genome sequence of Haloferax volcanii DS2, a model archaeon.</title>
        <authorList>
            <person name="Hartman A.L."/>
            <person name="Norais C."/>
            <person name="Badger J.H."/>
            <person name="Delmas S."/>
            <person name="Haldenby S."/>
            <person name="Madupu R."/>
            <person name="Robinson J."/>
            <person name="Khouri H."/>
            <person name="Ren Q."/>
            <person name="Lowe T.M."/>
            <person name="Maupin-Furlow J."/>
            <person name="Pohlschroder M."/>
            <person name="Daniels C."/>
            <person name="Pfeiffer F."/>
            <person name="Allers T."/>
            <person name="Eisen J.A."/>
        </authorList>
    </citation>
    <scope>NUCLEOTIDE SEQUENCE [LARGE SCALE GENOMIC DNA]</scope>
    <source>
        <strain>ATCC 29605 / DSM 3757 / JCM 8879 / NBRC 14742 / NCIMB 2012 / VKM B-1768 / DS2</strain>
    </source>
</reference>
<reference key="2">
    <citation type="journal article" date="1999" name="Genetics">
        <title>Genetic identification of three ABC transporters as essential elements for nitrate respiration in Haloferax volcanii.</title>
        <authorList>
            <person name="Wanner C."/>
            <person name="Soppa J."/>
        </authorList>
    </citation>
    <scope>NUCLEOTIDE SEQUENCE [GENOMIC DNA] OF 111-342</scope>
    <source>
        <strain>DS2 / WR 340</strain>
    </source>
</reference>
<sequence>MAIERRRFLQAAGVGAVLGLSGCTGNTSPPQANNETAEGSGGSESGDGSTQELTLATTTSTYDTGLLDALNPVFEEKFNARVKTISQGTGAAIETARNGDADVILVHARGAEDEFLQDGYGVNRRDVMFNDFVVVGPADDPAGISGMESAADAFATVADAGATFVSRGDDSGTNKKELLIWEAAGVEPSGTWYREIGKGMGDTLVQADQSGAYTLSDRGTFLATQDNIDLEIQVQGPLKGGPTILKNPYGVIPVNPAKYPDVNYSLAMAYAGFLTSPEGQEIISNYTANGSQLFFPNALSENPQFGQYVPVNYDGGENASSSASVSDAQFESWVAQHVPEDF</sequence>
<feature type="signal peptide" description="Tat-type signal" evidence="1">
    <location>
        <begin position="1"/>
        <end position="32"/>
    </location>
</feature>
<feature type="chain" id="PRO_0000421004" description="Putative ABC transporter anion-binding protein HVO_1888">
    <location>
        <begin position="33"/>
        <end position="342"/>
    </location>
</feature>
<feature type="region of interest" description="Disordered" evidence="2">
    <location>
        <begin position="24"/>
        <end position="52"/>
    </location>
</feature>
<feature type="compositionally biased region" description="Polar residues" evidence="2">
    <location>
        <begin position="24"/>
        <end position="37"/>
    </location>
</feature>
<protein>
    <recommendedName>
        <fullName>Putative ABC transporter anion-binding protein HVO_1888</fullName>
    </recommendedName>
</protein>
<dbReference type="EMBL" id="CP001956">
    <property type="protein sequence ID" value="ADE05022.1"/>
    <property type="molecule type" value="Genomic_DNA"/>
</dbReference>
<dbReference type="EMBL" id="AJ238877">
    <property type="protein sequence ID" value="CAB42540.1"/>
    <property type="molecule type" value="Genomic_DNA"/>
</dbReference>
<dbReference type="RefSeq" id="WP_004041769.1">
    <property type="nucleotide sequence ID" value="NC_013967.1"/>
</dbReference>
<dbReference type="SMR" id="D4GSY9"/>
<dbReference type="STRING" id="309800.HVO_1888"/>
<dbReference type="PaxDb" id="309800-C498_04705"/>
<dbReference type="EnsemblBacteria" id="ADE05022">
    <property type="protein sequence ID" value="ADE05022"/>
    <property type="gene ID" value="HVO_1888"/>
</dbReference>
<dbReference type="GeneID" id="8925827"/>
<dbReference type="KEGG" id="hvo:HVO_1888"/>
<dbReference type="eggNOG" id="arCOG00229">
    <property type="taxonomic scope" value="Archaea"/>
</dbReference>
<dbReference type="HOGENOM" id="CLU_061511_0_0_2"/>
<dbReference type="OrthoDB" id="14917at2157"/>
<dbReference type="Proteomes" id="UP000008243">
    <property type="component" value="Chromosome"/>
</dbReference>
<dbReference type="Gene3D" id="3.40.190.10">
    <property type="entry name" value="Periplasmic binding protein-like II"/>
    <property type="match status" value="2"/>
</dbReference>
<dbReference type="InterPro" id="IPR052738">
    <property type="entry name" value="ABC-Tungstate_binding"/>
</dbReference>
<dbReference type="InterPro" id="IPR024370">
    <property type="entry name" value="PBP_domain"/>
</dbReference>
<dbReference type="InterPro" id="IPR006311">
    <property type="entry name" value="TAT_signal"/>
</dbReference>
<dbReference type="InterPro" id="IPR019546">
    <property type="entry name" value="TAT_signal_bac_arc"/>
</dbReference>
<dbReference type="NCBIfam" id="TIGR01409">
    <property type="entry name" value="TAT_signal_seq"/>
    <property type="match status" value="1"/>
</dbReference>
<dbReference type="PANTHER" id="PTHR37945">
    <property type="entry name" value="EXTRACELLULAR TUNGSTATE BINDING PROTEIN"/>
    <property type="match status" value="1"/>
</dbReference>
<dbReference type="PANTHER" id="PTHR37945:SF1">
    <property type="entry name" value="EXTRACELLULAR TUNGSTATE BINDING PROTEIN"/>
    <property type="match status" value="1"/>
</dbReference>
<dbReference type="Pfam" id="PF12849">
    <property type="entry name" value="PBP_like_2"/>
    <property type="match status" value="1"/>
</dbReference>
<dbReference type="SUPFAM" id="SSF53850">
    <property type="entry name" value="Periplasmic binding protein-like II"/>
    <property type="match status" value="1"/>
</dbReference>
<dbReference type="PROSITE" id="PS51318">
    <property type="entry name" value="TAT"/>
    <property type="match status" value="1"/>
</dbReference>
<organism>
    <name type="scientific">Haloferax volcanii (strain ATCC 29605 / DSM 3757 / JCM 8879 / NBRC 14742 / NCIMB 2012 / VKM B-1768 / DS2)</name>
    <name type="common">Halobacterium volcanii</name>
    <dbReference type="NCBI Taxonomy" id="309800"/>
    <lineage>
        <taxon>Archaea</taxon>
        <taxon>Methanobacteriati</taxon>
        <taxon>Methanobacteriota</taxon>
        <taxon>Stenosarchaea group</taxon>
        <taxon>Halobacteria</taxon>
        <taxon>Halobacteriales</taxon>
        <taxon>Haloferacaceae</taxon>
        <taxon>Haloferax</taxon>
    </lineage>
</organism>
<proteinExistence type="inferred from homology"/>
<gene>
    <name type="ordered locus">HVO_1888</name>
</gene>
<keyword id="KW-1185">Reference proteome</keyword>
<keyword id="KW-0732">Signal</keyword>
<comment type="function">
    <text evidence="3">Part of an ABC transporter complex involved in anions import.</text>
</comment>
<comment type="subunit">
    <text evidence="3">The complex is composed of two ATP-binding proteins (HVO_1886), two transmembrane proteins (HVO_1887) and a solute-binding protein (HVO_1888).</text>
</comment>
<comment type="PTM">
    <text>Predicted to be exported by the Tat system. The position of the signal peptide cleavage has not been experimentally proven.</text>
</comment>
<name>ANTRB_HALVD</name>
<evidence type="ECO:0000255" key="1">
    <source>
        <dbReference type="PROSITE-ProRule" id="PRU00648"/>
    </source>
</evidence>
<evidence type="ECO:0000256" key="2">
    <source>
        <dbReference type="SAM" id="MobiDB-lite"/>
    </source>
</evidence>
<evidence type="ECO:0000305" key="3"/>
<accession>D4GSY9</accession>
<accession>Q9Y8J5</accession>